<reference key="1">
    <citation type="submission" date="1999-11" db="EMBL/GenBank/DDBJ databases">
        <title>Clostridium perfringens RNA polymerase alpha subunit.</title>
        <authorList>
            <person name="Katayama S."/>
        </authorList>
    </citation>
    <scope>NUCLEOTIDE SEQUENCE [GENOMIC DNA]</scope>
</reference>
<reference key="2">
    <citation type="journal article" date="2006" name="Genome Res.">
        <title>Skewed genomic variability in strains of the toxigenic bacterial pathogen, Clostridium perfringens.</title>
        <authorList>
            <person name="Myers G.S.A."/>
            <person name="Rasko D.A."/>
            <person name="Cheung J.K."/>
            <person name="Ravel J."/>
            <person name="Seshadri R."/>
            <person name="DeBoy R.T."/>
            <person name="Ren Q."/>
            <person name="Varga J."/>
            <person name="Awad M.M."/>
            <person name="Brinkac L.M."/>
            <person name="Daugherty S.C."/>
            <person name="Haft D.H."/>
            <person name="Dodson R.J."/>
            <person name="Madupu R."/>
            <person name="Nelson W.C."/>
            <person name="Rosovitz M.J."/>
            <person name="Sullivan S.A."/>
            <person name="Khouri H."/>
            <person name="Dimitrov G.I."/>
            <person name="Watkins K.L."/>
            <person name="Mulligan S."/>
            <person name="Benton J."/>
            <person name="Radune D."/>
            <person name="Fisher D.J."/>
            <person name="Atkins H.S."/>
            <person name="Hiscox T."/>
            <person name="Jost B.H."/>
            <person name="Billington S.J."/>
            <person name="Songer J.G."/>
            <person name="McClane B.A."/>
            <person name="Titball R.W."/>
            <person name="Rood J.I."/>
            <person name="Melville S.B."/>
            <person name="Paulsen I.T."/>
        </authorList>
    </citation>
    <scope>NUCLEOTIDE SEQUENCE [LARGE SCALE GENOMIC DNA]</scope>
    <source>
        <strain>ATCC 13124 / DSM 756 / JCM 1290 / NCIMB 6125 / NCTC 8237 / S 107 / Type A</strain>
    </source>
</reference>
<comment type="function">
    <text evidence="1">DNA-dependent RNA polymerase catalyzes the transcription of DNA into RNA using the four ribonucleoside triphosphates as substrates.</text>
</comment>
<comment type="catalytic activity">
    <reaction evidence="1">
        <text>RNA(n) + a ribonucleoside 5'-triphosphate = RNA(n+1) + diphosphate</text>
        <dbReference type="Rhea" id="RHEA:21248"/>
        <dbReference type="Rhea" id="RHEA-COMP:14527"/>
        <dbReference type="Rhea" id="RHEA-COMP:17342"/>
        <dbReference type="ChEBI" id="CHEBI:33019"/>
        <dbReference type="ChEBI" id="CHEBI:61557"/>
        <dbReference type="ChEBI" id="CHEBI:140395"/>
        <dbReference type="EC" id="2.7.7.6"/>
    </reaction>
</comment>
<comment type="subunit">
    <text evidence="1">Homodimer. The RNAP catalytic core consists of 2 alpha, 1 beta, 1 beta' and 1 omega subunit. When a sigma factor is associated with the core the holoenzyme is formed, which can initiate transcription.</text>
</comment>
<comment type="domain">
    <text evidence="1">The N-terminal domain is essential for RNAP assembly and basal transcription, whereas the C-terminal domain is involved in interaction with transcriptional regulators and with upstream promoter elements.</text>
</comment>
<comment type="similarity">
    <text evidence="1">Belongs to the RNA polymerase alpha chain family.</text>
</comment>
<accession>Q0TMS5</accession>
<accession>Q9LBW9</accession>
<protein>
    <recommendedName>
        <fullName evidence="1">DNA-directed RNA polymerase subunit alpha</fullName>
        <shortName evidence="1">RNAP subunit alpha</shortName>
        <ecNumber evidence="1">2.7.7.6</ecNumber>
    </recommendedName>
    <alternativeName>
        <fullName evidence="1">RNA polymerase subunit alpha</fullName>
    </alternativeName>
    <alternativeName>
        <fullName evidence="1">Transcriptase subunit alpha</fullName>
    </alternativeName>
</protein>
<proteinExistence type="inferred from homology"/>
<sequence>MLEIEKPVIQCVESNDNGTYGKFEIEPLERGYGITLGNALRRILLSSLPGVAPTSVKIDSVLHEFSTITGVKEDVTEIILNLKMLALTMEGEGPKTIYIDAQGPGVVTGADIKTDGDVEVVNKDLHIATLDNDGKLYMEIVVNRGRGYVTQNKNKTEDLPLSAIAIDSIYTPVKRVNFSVQNTRVGQITDYDKLTLEIWTNGTIRIEEAISLSAKILIEHFKLFMTLTDNANDVEIMIEKEEDKKEKALEMTIEELDLSVRSYNCLKRAGINTVQELAGKSMDDMMKVRNLGKKSLEEVERKLNELGLNLRLNDE</sequence>
<dbReference type="EC" id="2.7.7.6" evidence="1"/>
<dbReference type="EMBL" id="AB034247">
    <property type="protein sequence ID" value="BAA95357.1"/>
    <property type="molecule type" value="Genomic_DNA"/>
</dbReference>
<dbReference type="EMBL" id="CP000246">
    <property type="protein sequence ID" value="ABG82675.1"/>
    <property type="molecule type" value="Genomic_DNA"/>
</dbReference>
<dbReference type="RefSeq" id="WP_003454404.1">
    <property type="nucleotide sequence ID" value="NC_008261.1"/>
</dbReference>
<dbReference type="SMR" id="Q0TMS5"/>
<dbReference type="STRING" id="195103.CPF_2685"/>
<dbReference type="PaxDb" id="195103-CPF_2685"/>
<dbReference type="KEGG" id="cpf:CPF_2685"/>
<dbReference type="eggNOG" id="COG0202">
    <property type="taxonomic scope" value="Bacteria"/>
</dbReference>
<dbReference type="HOGENOM" id="CLU_053084_0_1_9"/>
<dbReference type="Proteomes" id="UP000001823">
    <property type="component" value="Chromosome"/>
</dbReference>
<dbReference type="GO" id="GO:0005737">
    <property type="term" value="C:cytoplasm"/>
    <property type="evidence" value="ECO:0007669"/>
    <property type="project" value="UniProtKB-ARBA"/>
</dbReference>
<dbReference type="GO" id="GO:0000428">
    <property type="term" value="C:DNA-directed RNA polymerase complex"/>
    <property type="evidence" value="ECO:0007669"/>
    <property type="project" value="UniProtKB-KW"/>
</dbReference>
<dbReference type="GO" id="GO:0003677">
    <property type="term" value="F:DNA binding"/>
    <property type="evidence" value="ECO:0007669"/>
    <property type="project" value="UniProtKB-UniRule"/>
</dbReference>
<dbReference type="GO" id="GO:0003899">
    <property type="term" value="F:DNA-directed RNA polymerase activity"/>
    <property type="evidence" value="ECO:0007669"/>
    <property type="project" value="UniProtKB-UniRule"/>
</dbReference>
<dbReference type="GO" id="GO:0046983">
    <property type="term" value="F:protein dimerization activity"/>
    <property type="evidence" value="ECO:0007669"/>
    <property type="project" value="InterPro"/>
</dbReference>
<dbReference type="GO" id="GO:0006351">
    <property type="term" value="P:DNA-templated transcription"/>
    <property type="evidence" value="ECO:0007669"/>
    <property type="project" value="UniProtKB-UniRule"/>
</dbReference>
<dbReference type="CDD" id="cd06928">
    <property type="entry name" value="RNAP_alpha_NTD"/>
    <property type="match status" value="1"/>
</dbReference>
<dbReference type="FunFam" id="2.170.120.12:FF:000001">
    <property type="entry name" value="DNA-directed RNA polymerase subunit alpha"/>
    <property type="match status" value="1"/>
</dbReference>
<dbReference type="Gene3D" id="1.10.150.20">
    <property type="entry name" value="5' to 3' exonuclease, C-terminal subdomain"/>
    <property type="match status" value="1"/>
</dbReference>
<dbReference type="Gene3D" id="2.170.120.12">
    <property type="entry name" value="DNA-directed RNA polymerase, insert domain"/>
    <property type="match status" value="1"/>
</dbReference>
<dbReference type="Gene3D" id="3.30.1360.10">
    <property type="entry name" value="RNA polymerase, RBP11-like subunit"/>
    <property type="match status" value="1"/>
</dbReference>
<dbReference type="HAMAP" id="MF_00059">
    <property type="entry name" value="RNApol_bact_RpoA"/>
    <property type="match status" value="1"/>
</dbReference>
<dbReference type="InterPro" id="IPR011262">
    <property type="entry name" value="DNA-dir_RNA_pol_insert"/>
</dbReference>
<dbReference type="InterPro" id="IPR011263">
    <property type="entry name" value="DNA-dir_RNA_pol_RpoA/D/Rpb3"/>
</dbReference>
<dbReference type="InterPro" id="IPR011773">
    <property type="entry name" value="DNA-dir_RpoA"/>
</dbReference>
<dbReference type="InterPro" id="IPR036603">
    <property type="entry name" value="RBP11-like"/>
</dbReference>
<dbReference type="InterPro" id="IPR011260">
    <property type="entry name" value="RNAP_asu_C"/>
</dbReference>
<dbReference type="InterPro" id="IPR036643">
    <property type="entry name" value="RNApol_insert_sf"/>
</dbReference>
<dbReference type="NCBIfam" id="NF003513">
    <property type="entry name" value="PRK05182.1-2"/>
    <property type="match status" value="1"/>
</dbReference>
<dbReference type="NCBIfam" id="NF003515">
    <property type="entry name" value="PRK05182.2-1"/>
    <property type="match status" value="1"/>
</dbReference>
<dbReference type="NCBIfam" id="NF003519">
    <property type="entry name" value="PRK05182.2-5"/>
    <property type="match status" value="1"/>
</dbReference>
<dbReference type="NCBIfam" id="TIGR02027">
    <property type="entry name" value="rpoA"/>
    <property type="match status" value="1"/>
</dbReference>
<dbReference type="Pfam" id="PF01000">
    <property type="entry name" value="RNA_pol_A_bac"/>
    <property type="match status" value="1"/>
</dbReference>
<dbReference type="Pfam" id="PF03118">
    <property type="entry name" value="RNA_pol_A_CTD"/>
    <property type="match status" value="1"/>
</dbReference>
<dbReference type="Pfam" id="PF01193">
    <property type="entry name" value="RNA_pol_L"/>
    <property type="match status" value="1"/>
</dbReference>
<dbReference type="SMART" id="SM00662">
    <property type="entry name" value="RPOLD"/>
    <property type="match status" value="1"/>
</dbReference>
<dbReference type="SUPFAM" id="SSF47789">
    <property type="entry name" value="C-terminal domain of RNA polymerase alpha subunit"/>
    <property type="match status" value="1"/>
</dbReference>
<dbReference type="SUPFAM" id="SSF56553">
    <property type="entry name" value="Insert subdomain of RNA polymerase alpha subunit"/>
    <property type="match status" value="1"/>
</dbReference>
<dbReference type="SUPFAM" id="SSF55257">
    <property type="entry name" value="RBP11-like subunits of RNA polymerase"/>
    <property type="match status" value="1"/>
</dbReference>
<feature type="chain" id="PRO_0000264493" description="DNA-directed RNA polymerase subunit alpha">
    <location>
        <begin position="1"/>
        <end position="315"/>
    </location>
</feature>
<feature type="region of interest" description="Alpha N-terminal domain (alpha-NTD)" evidence="1">
    <location>
        <begin position="1"/>
        <end position="228"/>
    </location>
</feature>
<feature type="region of interest" description="Alpha C-terminal domain (alpha-CTD)" evidence="1">
    <location>
        <begin position="245"/>
        <end position="315"/>
    </location>
</feature>
<name>RPOA_CLOP1</name>
<keyword id="KW-0240">DNA-directed RNA polymerase</keyword>
<keyword id="KW-0548">Nucleotidyltransferase</keyword>
<keyword id="KW-0804">Transcription</keyword>
<keyword id="KW-0808">Transferase</keyword>
<gene>
    <name evidence="1" type="primary">rpoA</name>
    <name type="ordered locus">CPF_2685</name>
</gene>
<evidence type="ECO:0000255" key="1">
    <source>
        <dbReference type="HAMAP-Rule" id="MF_00059"/>
    </source>
</evidence>
<organism>
    <name type="scientific">Clostridium perfringens (strain ATCC 13124 / DSM 756 / JCM 1290 / NCIMB 6125 / NCTC 8237 / Type A)</name>
    <dbReference type="NCBI Taxonomy" id="195103"/>
    <lineage>
        <taxon>Bacteria</taxon>
        <taxon>Bacillati</taxon>
        <taxon>Bacillota</taxon>
        <taxon>Clostridia</taxon>
        <taxon>Eubacteriales</taxon>
        <taxon>Clostridiaceae</taxon>
        <taxon>Clostridium</taxon>
    </lineage>
</organism>